<sequence>MSQLVYFSSSSENTQRFIERLGLPAVRIPLNERERIQVDEPYILIVPSYGGGGTAGAVPRQVIRFLNDEHNRALLRGVIASGNRNFGEAYGRAGDVIARKCGVPWLYRFELMGTQSDIENVRKGVTEFWQRQPQNA</sequence>
<accession>B2U069</accession>
<reference key="1">
    <citation type="submission" date="2008-05" db="EMBL/GenBank/DDBJ databases">
        <title>Complete sequence of Shigella boydii serotype 18 strain BS512.</title>
        <authorList>
            <person name="Rasko D.A."/>
            <person name="Rosovitz M."/>
            <person name="Maurelli A.T."/>
            <person name="Myers G."/>
            <person name="Seshadri R."/>
            <person name="Cer R."/>
            <person name="Jiang L."/>
            <person name="Ravel J."/>
            <person name="Sebastian Y."/>
        </authorList>
    </citation>
    <scope>NUCLEOTIDE SEQUENCE [LARGE SCALE GENOMIC DNA]</scope>
    <source>
        <strain>CDC 3083-94 / BS512</strain>
    </source>
</reference>
<gene>
    <name evidence="1" type="primary">nrdI</name>
    <name type="ordered locus">SbBS512_E3205</name>
</gene>
<feature type="chain" id="PRO_1000095635" description="Protein NrdI">
    <location>
        <begin position="1"/>
        <end position="136"/>
    </location>
</feature>
<evidence type="ECO:0000255" key="1">
    <source>
        <dbReference type="HAMAP-Rule" id="MF_00128"/>
    </source>
</evidence>
<comment type="function">
    <text evidence="1">Probably involved in ribonucleotide reductase function.</text>
</comment>
<comment type="similarity">
    <text evidence="1">Belongs to the NrdI family.</text>
</comment>
<name>NRDI_SHIB3</name>
<keyword id="KW-1185">Reference proteome</keyword>
<organism>
    <name type="scientific">Shigella boydii serotype 18 (strain CDC 3083-94 / BS512)</name>
    <dbReference type="NCBI Taxonomy" id="344609"/>
    <lineage>
        <taxon>Bacteria</taxon>
        <taxon>Pseudomonadati</taxon>
        <taxon>Pseudomonadota</taxon>
        <taxon>Gammaproteobacteria</taxon>
        <taxon>Enterobacterales</taxon>
        <taxon>Enterobacteriaceae</taxon>
        <taxon>Shigella</taxon>
    </lineage>
</organism>
<protein>
    <recommendedName>
        <fullName evidence="1">Protein NrdI</fullName>
    </recommendedName>
</protein>
<proteinExistence type="inferred from homology"/>
<dbReference type="EMBL" id="CP001063">
    <property type="protein sequence ID" value="ACD09170.1"/>
    <property type="molecule type" value="Genomic_DNA"/>
</dbReference>
<dbReference type="RefSeq" id="WP_000080947.1">
    <property type="nucleotide sequence ID" value="NC_010658.1"/>
</dbReference>
<dbReference type="SMR" id="B2U069"/>
<dbReference type="STRING" id="344609.SbBS512_E3205"/>
<dbReference type="GeneID" id="75172757"/>
<dbReference type="KEGG" id="sbc:SbBS512_E3205"/>
<dbReference type="HOGENOM" id="CLU_114845_0_0_6"/>
<dbReference type="Proteomes" id="UP000001030">
    <property type="component" value="Chromosome"/>
</dbReference>
<dbReference type="GO" id="GO:0010181">
    <property type="term" value="F:FMN binding"/>
    <property type="evidence" value="ECO:0007669"/>
    <property type="project" value="InterPro"/>
</dbReference>
<dbReference type="GO" id="GO:0036211">
    <property type="term" value="P:protein modification process"/>
    <property type="evidence" value="ECO:0007669"/>
    <property type="project" value="InterPro"/>
</dbReference>
<dbReference type="FunFam" id="3.40.50.360:FF:000005">
    <property type="entry name" value="Protein NrdI"/>
    <property type="match status" value="1"/>
</dbReference>
<dbReference type="Gene3D" id="3.40.50.360">
    <property type="match status" value="1"/>
</dbReference>
<dbReference type="HAMAP" id="MF_00128">
    <property type="entry name" value="NrdI"/>
    <property type="match status" value="1"/>
</dbReference>
<dbReference type="InterPro" id="IPR029039">
    <property type="entry name" value="Flavoprotein-like_sf"/>
</dbReference>
<dbReference type="InterPro" id="IPR020852">
    <property type="entry name" value="RNR_Ib_NrdI_bac"/>
</dbReference>
<dbReference type="InterPro" id="IPR004465">
    <property type="entry name" value="RNR_NrdI"/>
</dbReference>
<dbReference type="NCBIfam" id="TIGR00333">
    <property type="entry name" value="nrdI"/>
    <property type="match status" value="1"/>
</dbReference>
<dbReference type="PANTHER" id="PTHR37297">
    <property type="entry name" value="PROTEIN NRDI"/>
    <property type="match status" value="1"/>
</dbReference>
<dbReference type="PANTHER" id="PTHR37297:SF1">
    <property type="entry name" value="PROTEIN NRDI"/>
    <property type="match status" value="1"/>
</dbReference>
<dbReference type="Pfam" id="PF07972">
    <property type="entry name" value="Flavodoxin_NdrI"/>
    <property type="match status" value="1"/>
</dbReference>
<dbReference type="PIRSF" id="PIRSF005087">
    <property type="entry name" value="NrdI"/>
    <property type="match status" value="1"/>
</dbReference>
<dbReference type="SUPFAM" id="SSF52218">
    <property type="entry name" value="Flavoproteins"/>
    <property type="match status" value="1"/>
</dbReference>